<sequence>MELPNIMHPVAKLSTALAAALMLSGCMPGEIRPTIGQQMETGDQRFGDLVFRQLAPNVWQHTSYLDMPGFGAVASNGLIVRDGGRVLVVDTAWTDDQTAQILNWIKQEINLPVALAVVTHAHQDKMGGMDALHAAGIATYANALSNQLAPQEGMVAAQHSLTFAANGWVEPATAPNFGPLKVFYPGPGHTSDNITVGIDGTDIAFGGCLIKDSKAKSLGNLGDADTEHYAASARAFGAAFPKASMIVMSHSAPDSRAAITHTARMADKLR</sequence>
<dbReference type="EC" id="3.5.2.6" evidence="2"/>
<dbReference type="EMBL" id="FN396876">
    <property type="protein sequence ID" value="CAZ39946.1"/>
    <property type="molecule type" value="Genomic_DNA"/>
</dbReference>
<dbReference type="RefSeq" id="YP_005352173.1">
    <property type="nucleotide sequence ID" value="NC_016980.1"/>
</dbReference>
<dbReference type="RefSeq" id="YP_006958736.1">
    <property type="nucleotide sequence ID" value="NC_019153.1"/>
</dbReference>
<dbReference type="RefSeq" id="YP_006959150.1">
    <property type="nucleotide sequence ID" value="NC_019158.1"/>
</dbReference>
<dbReference type="RefSeq" id="YP_006959255.1">
    <property type="nucleotide sequence ID" value="NC_019162.1"/>
</dbReference>
<dbReference type="RefSeq" id="YP_006959318.1">
    <property type="nucleotide sequence ID" value="NC_019163.1"/>
</dbReference>
<dbReference type="RefSeq" id="YP_007195502.1">
    <property type="nucleotide sequence ID" value="NC_019889.1"/>
</dbReference>
<dbReference type="RefSeq" id="YP_007641427.1">
    <property type="nucleotide sequence ID" value="NC_020811.1"/>
</dbReference>
<dbReference type="RefSeq" id="YP_008719663.1">
    <property type="nucleotide sequence ID" value="NC_022609.1"/>
</dbReference>
<dbReference type="RefSeq" id="YP_009023060.1">
    <property type="nucleotide sequence ID" value="NC_023908.1"/>
</dbReference>
<dbReference type="RefSeq" id="YP_009071638.1">
    <property type="nucleotide sequence ID" value="NC_025184.1"/>
</dbReference>
<dbReference type="PDB" id="3PG4">
    <property type="method" value="X-ray"/>
    <property type="resolution" value="2.00 A"/>
    <property type="chains" value="A=49-270"/>
</dbReference>
<dbReference type="PDB" id="3RKJ">
    <property type="method" value="X-ray"/>
    <property type="resolution" value="2.00 A"/>
    <property type="chains" value="A/B=39-270"/>
</dbReference>
<dbReference type="PDB" id="3RKK">
    <property type="method" value="X-ray"/>
    <property type="resolution" value="2.35 A"/>
    <property type="chains" value="A/B=39-270"/>
</dbReference>
<dbReference type="PDB" id="3SBL">
    <property type="method" value="X-ray"/>
    <property type="resolution" value="2.31 A"/>
    <property type="chains" value="A=39-270"/>
</dbReference>
<dbReference type="PDB" id="3SFP">
    <property type="method" value="X-ray"/>
    <property type="resolution" value="2.27 A"/>
    <property type="chains" value="A/B/C/D=39-270"/>
</dbReference>
<dbReference type="PDB" id="3SPU">
    <property type="method" value="X-ray"/>
    <property type="resolution" value="2.10 A"/>
    <property type="chains" value="A/B/C/D/E=27-270"/>
</dbReference>
<dbReference type="PDB" id="3SRX">
    <property type="method" value="X-ray"/>
    <property type="resolution" value="2.50 A"/>
    <property type="chains" value="A/B=37-270"/>
</dbReference>
<dbReference type="PDB" id="3ZR9">
    <property type="method" value="X-ray"/>
    <property type="resolution" value="1.91 A"/>
    <property type="chains" value="A=42-270"/>
</dbReference>
<dbReference type="PDB" id="4EXS">
    <property type="method" value="X-ray"/>
    <property type="resolution" value="2.40 A"/>
    <property type="chains" value="A/B=1-270"/>
</dbReference>
<dbReference type="PDB" id="4EXY">
    <property type="method" value="X-ray"/>
    <property type="resolution" value="1.47 A"/>
    <property type="chains" value="A/B=1-270"/>
</dbReference>
<dbReference type="PDB" id="4EY2">
    <property type="method" value="X-ray"/>
    <property type="resolution" value="1.17 A"/>
    <property type="chains" value="A/B=1-270"/>
</dbReference>
<dbReference type="PDB" id="4EYB">
    <property type="method" value="X-ray"/>
    <property type="resolution" value="1.16 A"/>
    <property type="chains" value="A/B=1-270"/>
</dbReference>
<dbReference type="PDB" id="4EYF">
    <property type="method" value="X-ray"/>
    <property type="resolution" value="1.80 A"/>
    <property type="chains" value="A/B=1-270"/>
</dbReference>
<dbReference type="PDB" id="4EYL">
    <property type="method" value="X-ray"/>
    <property type="resolution" value="1.90 A"/>
    <property type="chains" value="A/B=1-270"/>
</dbReference>
<dbReference type="PDB" id="4GYQ">
    <property type="method" value="X-ray"/>
    <property type="resolution" value="1.35 A"/>
    <property type="chains" value="A/B/C/D=31-270"/>
</dbReference>
<dbReference type="PDB" id="4GYU">
    <property type="method" value="X-ray"/>
    <property type="resolution" value="1.80 A"/>
    <property type="chains" value="A=31-270"/>
</dbReference>
<dbReference type="PDB" id="4H0D">
    <property type="method" value="X-ray"/>
    <property type="resolution" value="1.50 A"/>
    <property type="chains" value="A/B=31-270"/>
</dbReference>
<dbReference type="PDB" id="4HKY">
    <property type="method" value="X-ray"/>
    <property type="resolution" value="2.00 A"/>
    <property type="chains" value="A/B=31-270"/>
</dbReference>
<dbReference type="PDB" id="4HL1">
    <property type="method" value="X-ray"/>
    <property type="resolution" value="1.50 A"/>
    <property type="chains" value="A/B=31-270"/>
</dbReference>
<dbReference type="PDB" id="4HL2">
    <property type="method" value="X-ray"/>
    <property type="resolution" value="1.05 A"/>
    <property type="chains" value="A/B=31-270"/>
</dbReference>
<dbReference type="PDB" id="4RAM">
    <property type="method" value="X-ray"/>
    <property type="resolution" value="1.50 A"/>
    <property type="chains" value="A/B=31-270"/>
</dbReference>
<dbReference type="PDB" id="4RAW">
    <property type="method" value="X-ray"/>
    <property type="resolution" value="1.30 A"/>
    <property type="chains" value="A/B=31-270"/>
</dbReference>
<dbReference type="PDB" id="4RBS">
    <property type="method" value="X-ray"/>
    <property type="resolution" value="2.40 A"/>
    <property type="chains" value="A/B=31-270"/>
</dbReference>
<dbReference type="PDB" id="4RL0">
    <property type="method" value="X-ray"/>
    <property type="resolution" value="1.30 A"/>
    <property type="chains" value="A/B=29-270"/>
</dbReference>
<dbReference type="PDB" id="4RL2">
    <property type="method" value="X-ray"/>
    <property type="resolution" value="2.01 A"/>
    <property type="chains" value="A/B=29-270"/>
</dbReference>
<dbReference type="PDB" id="4RM5">
    <property type="method" value="X-ray"/>
    <property type="resolution" value="2.10 A"/>
    <property type="chains" value="A/B/C/D=29-270"/>
</dbReference>
<dbReference type="PDB" id="4U4L">
    <property type="method" value="X-ray"/>
    <property type="resolution" value="1.90 A"/>
    <property type="chains" value="A/B/C/D=27-270"/>
</dbReference>
<dbReference type="PDB" id="5A5Z">
    <property type="method" value="X-ray"/>
    <property type="resolution" value="2.60 A"/>
    <property type="chains" value="A/C=29-270"/>
</dbReference>
<dbReference type="PDB" id="5JQJ">
    <property type="method" value="X-ray"/>
    <property type="resolution" value="1.67 A"/>
    <property type="chains" value="A=29-270"/>
</dbReference>
<dbReference type="PDB" id="5K4M">
    <property type="method" value="X-ray"/>
    <property type="resolution" value="1.98 A"/>
    <property type="chains" value="A=29-270"/>
</dbReference>
<dbReference type="PDB" id="5N0H">
    <property type="method" value="X-ray"/>
    <property type="resolution" value="1.90 A"/>
    <property type="chains" value="A/B=29-270"/>
</dbReference>
<dbReference type="PDB" id="5N0I">
    <property type="method" value="X-ray"/>
    <property type="resolution" value="1.47 A"/>
    <property type="chains" value="A/B=29-270"/>
</dbReference>
<dbReference type="PDB" id="5NBK">
    <property type="method" value="X-ray"/>
    <property type="resolution" value="2.60 A"/>
    <property type="chains" value="A/C=29-270"/>
</dbReference>
<dbReference type="PDB" id="5O2E">
    <property type="method" value="X-ray"/>
    <property type="resolution" value="1.30 A"/>
    <property type="chains" value="A/B=29-270"/>
</dbReference>
<dbReference type="PDB" id="5O2F">
    <property type="method" value="X-ray"/>
    <property type="resolution" value="2.01 A"/>
    <property type="chains" value="A/B=29-270"/>
</dbReference>
<dbReference type="PDB" id="5WIG">
    <property type="method" value="X-ray"/>
    <property type="resolution" value="1.40 A"/>
    <property type="chains" value="A/B=42-270"/>
</dbReference>
<dbReference type="PDB" id="5XP6">
    <property type="method" value="X-ray"/>
    <property type="resolution" value="0.95 A"/>
    <property type="chains" value="A=29-270"/>
</dbReference>
<dbReference type="PDB" id="5XP9">
    <property type="method" value="X-ray"/>
    <property type="resolution" value="1.55 A"/>
    <property type="chains" value="A=29-270"/>
</dbReference>
<dbReference type="PDB" id="5ZGE">
    <property type="method" value="X-ray"/>
    <property type="resolution" value="1.00 A"/>
    <property type="chains" value="A/B=29-270"/>
</dbReference>
<dbReference type="PDB" id="5ZGF">
    <property type="method" value="X-ray"/>
    <property type="resolution" value="1.20 A"/>
    <property type="chains" value="A=29-270"/>
</dbReference>
<dbReference type="PDB" id="5ZGI">
    <property type="method" value="X-ray"/>
    <property type="resolution" value="0.98 A"/>
    <property type="chains" value="A=29-270"/>
</dbReference>
<dbReference type="PDB" id="5ZGP">
    <property type="method" value="X-ray"/>
    <property type="resolution" value="1.15 A"/>
    <property type="chains" value="A/B=29-270"/>
</dbReference>
<dbReference type="PDB" id="5ZGQ">
    <property type="method" value="X-ray"/>
    <property type="resolution" value="1.50 A"/>
    <property type="chains" value="A/B=29-270"/>
</dbReference>
<dbReference type="PDB" id="5ZGR">
    <property type="method" value="X-ray"/>
    <property type="resolution" value="1.15 A"/>
    <property type="chains" value="A/B=29-270"/>
</dbReference>
<dbReference type="PDB" id="5ZGT">
    <property type="method" value="X-ray"/>
    <property type="resolution" value="1.20 A"/>
    <property type="chains" value="A/B=29-270"/>
</dbReference>
<dbReference type="PDB" id="5ZGU">
    <property type="method" value="X-ray"/>
    <property type="resolution" value="1.55 A"/>
    <property type="chains" value="A/B=29-270"/>
</dbReference>
<dbReference type="PDB" id="5ZGV">
    <property type="method" value="X-ray"/>
    <property type="resolution" value="1.15 A"/>
    <property type="chains" value="A/B=29-270"/>
</dbReference>
<dbReference type="PDB" id="5ZGW">
    <property type="method" value="X-ray"/>
    <property type="resolution" value="0.95 A"/>
    <property type="chains" value="A=29-270"/>
</dbReference>
<dbReference type="PDB" id="5ZGX">
    <property type="method" value="X-ray"/>
    <property type="resolution" value="0.95 A"/>
    <property type="chains" value="A=29-270"/>
</dbReference>
<dbReference type="PDB" id="5ZGY">
    <property type="method" value="X-ray"/>
    <property type="resolution" value="0.95 A"/>
    <property type="chains" value="A=29-270"/>
</dbReference>
<dbReference type="PDB" id="5ZGZ">
    <property type="method" value="X-ray"/>
    <property type="resolution" value="0.95 A"/>
    <property type="chains" value="A=29-270"/>
</dbReference>
<dbReference type="PDB" id="5ZH1">
    <property type="method" value="X-ray"/>
    <property type="resolution" value="1.05 A"/>
    <property type="chains" value="A/B=29-270"/>
</dbReference>
<dbReference type="PDB" id="5ZIO">
    <property type="method" value="X-ray"/>
    <property type="resolution" value="0.98 A"/>
    <property type="chains" value="A=29-270"/>
</dbReference>
<dbReference type="PDB" id="5ZJ1">
    <property type="method" value="X-ray"/>
    <property type="resolution" value="0.96 A"/>
    <property type="chains" value="A=29-270"/>
</dbReference>
<dbReference type="PDB" id="5ZJ2">
    <property type="method" value="X-ray"/>
    <property type="resolution" value="1.10 A"/>
    <property type="chains" value="A=29-270"/>
</dbReference>
<dbReference type="PDB" id="5ZJ7">
    <property type="method" value="X-ray"/>
    <property type="resolution" value="0.96 A"/>
    <property type="chains" value="A=29-270"/>
</dbReference>
<dbReference type="PDB" id="5ZJ8">
    <property type="method" value="X-ray"/>
    <property type="resolution" value="0.96 A"/>
    <property type="chains" value="A=29-270"/>
</dbReference>
<dbReference type="PDB" id="5ZJC">
    <property type="method" value="X-ray"/>
    <property type="resolution" value="0.96 A"/>
    <property type="chains" value="A=29-270"/>
</dbReference>
<dbReference type="PDB" id="6C6I">
    <property type="method" value="X-ray"/>
    <property type="resolution" value="1.65 A"/>
    <property type="chains" value="A/B=39-63, A/B=75-270"/>
</dbReference>
<dbReference type="PDB" id="6CAC">
    <property type="method" value="X-ray"/>
    <property type="resolution" value="1.79 A"/>
    <property type="chains" value="A/B/C/D=39-270"/>
</dbReference>
<dbReference type="PDB" id="6D1A">
    <property type="method" value="X-ray"/>
    <property type="resolution" value="1.25 A"/>
    <property type="chains" value="A=42-270"/>
</dbReference>
<dbReference type="PDB" id="6D1B">
    <property type="method" value="X-ray"/>
    <property type="resolution" value="1.25 A"/>
    <property type="chains" value="A=42-270"/>
</dbReference>
<dbReference type="PDB" id="6D1C">
    <property type="method" value="X-ray"/>
    <property type="resolution" value="1.25 A"/>
    <property type="chains" value="A=42-270"/>
</dbReference>
<dbReference type="PDB" id="6D1D">
    <property type="method" value="X-ray"/>
    <property type="resolution" value="1.40 A"/>
    <property type="chains" value="A=42-270"/>
</dbReference>
<dbReference type="PDB" id="6D1E">
    <property type="method" value="X-ray"/>
    <property type="resolution" value="1.15 A"/>
    <property type="chains" value="A=42-270"/>
</dbReference>
<dbReference type="PDB" id="6D1F">
    <property type="method" value="X-ray"/>
    <property type="resolution" value="1.15 A"/>
    <property type="chains" value="A=42-270"/>
</dbReference>
<dbReference type="PDB" id="6D1G">
    <property type="method" value="X-ray"/>
    <property type="resolution" value="1.15 A"/>
    <property type="chains" value="A=42-270"/>
</dbReference>
<dbReference type="PDB" id="6D1H">
    <property type="method" value="X-ray"/>
    <property type="resolution" value="1.25 A"/>
    <property type="chains" value="A=42-270"/>
</dbReference>
<dbReference type="PDB" id="6D1I">
    <property type="method" value="X-ray"/>
    <property type="resolution" value="1.10 A"/>
    <property type="chains" value="A=42-270"/>
</dbReference>
<dbReference type="PDB" id="6D1J">
    <property type="method" value="X-ray"/>
    <property type="resolution" value="1.15 A"/>
    <property type="chains" value="A=42-270"/>
</dbReference>
<dbReference type="PDB" id="6D1K">
    <property type="method" value="X-ray"/>
    <property type="resolution" value="1.20 A"/>
    <property type="chains" value="A=42-270"/>
</dbReference>
<dbReference type="PDB" id="6EFJ">
    <property type="method" value="X-ray"/>
    <property type="resolution" value="1.65 A"/>
    <property type="chains" value="A=42-270"/>
</dbReference>
<dbReference type="PDB" id="6EX7">
    <property type="method" value="X-ray"/>
    <property type="resolution" value="1.95 A"/>
    <property type="chains" value="A/B=31-270"/>
</dbReference>
<dbReference type="PDB" id="6IBS">
    <property type="method" value="X-ray"/>
    <property type="resolution" value="1.37 A"/>
    <property type="chains" value="A/B=27-270"/>
</dbReference>
<dbReference type="PDB" id="6IBV">
    <property type="method" value="X-ray"/>
    <property type="resolution" value="1.40 A"/>
    <property type="chains" value="A/B=27-270"/>
</dbReference>
<dbReference type="PDB" id="6JKB">
    <property type="method" value="X-ray"/>
    <property type="resolution" value="2.44 A"/>
    <property type="chains" value="A/B=28-270"/>
</dbReference>
<dbReference type="PDB" id="6LHE">
    <property type="method" value="X-ray"/>
    <property type="resolution" value="1.21 A"/>
    <property type="chains" value="A/B=29-270"/>
</dbReference>
<dbReference type="PDB" id="6LIP">
    <property type="method" value="X-ray"/>
    <property type="resolution" value="0.98 A"/>
    <property type="chains" value="A=29-270"/>
</dbReference>
<dbReference type="PDB" id="6LIZ">
    <property type="method" value="X-ray"/>
    <property type="resolution" value="1.05 A"/>
    <property type="chains" value="A=29-270"/>
</dbReference>
<dbReference type="PDB" id="6LJ0">
    <property type="method" value="X-ray"/>
    <property type="resolution" value="1.20 A"/>
    <property type="chains" value="A=29-270"/>
</dbReference>
<dbReference type="PDB" id="6LJ1">
    <property type="method" value="X-ray"/>
    <property type="resolution" value="1.15 A"/>
    <property type="chains" value="A=29-270"/>
</dbReference>
<dbReference type="PDB" id="6LJ2">
    <property type="method" value="X-ray"/>
    <property type="resolution" value="1.35 A"/>
    <property type="chains" value="A=29-270"/>
</dbReference>
<dbReference type="PDB" id="6LJ4">
    <property type="method" value="X-ray"/>
    <property type="resolution" value="1.15 A"/>
    <property type="chains" value="A=29-270"/>
</dbReference>
<dbReference type="PDB" id="6LJ5">
    <property type="method" value="X-ray"/>
    <property type="resolution" value="1.26 A"/>
    <property type="chains" value="A=29-270"/>
</dbReference>
<dbReference type="PDB" id="6LJ6">
    <property type="method" value="X-ray"/>
    <property type="resolution" value="1.27 A"/>
    <property type="chains" value="A=29-270"/>
</dbReference>
<dbReference type="PDB" id="6LJ7">
    <property type="method" value="X-ray"/>
    <property type="resolution" value="1.16 A"/>
    <property type="chains" value="A=29-270"/>
</dbReference>
<dbReference type="PDB" id="6LJ8">
    <property type="method" value="X-ray"/>
    <property type="resolution" value="1.40 A"/>
    <property type="chains" value="A=29-270"/>
</dbReference>
<dbReference type="PDB" id="6MDU">
    <property type="method" value="X-ray"/>
    <property type="resolution" value="1.15 A"/>
    <property type="chains" value="A=42-270"/>
</dbReference>
<dbReference type="PDB" id="6MGY">
    <property type="method" value="X-ray"/>
    <property type="resolution" value="1.60 A"/>
    <property type="chains" value="A/B/C/D=31-270"/>
</dbReference>
<dbReference type="PDB" id="6MGZ">
    <property type="method" value="X-ray"/>
    <property type="resolution" value="1.65 A"/>
    <property type="chains" value="A/B=31-270"/>
</dbReference>
<dbReference type="PDB" id="6NY7">
    <property type="method" value="X-ray"/>
    <property type="resolution" value="1.40 A"/>
    <property type="chains" value="A=42-270"/>
</dbReference>
<dbReference type="PDB" id="6O3R">
    <property type="method" value="X-ray"/>
    <property type="resolution" value="1.30 A"/>
    <property type="chains" value="A=42-270"/>
</dbReference>
<dbReference type="PDB" id="6Q2Y">
    <property type="method" value="X-ray"/>
    <property type="resolution" value="1.00 A"/>
    <property type="chains" value="A/B=27-270"/>
</dbReference>
<dbReference type="PDB" id="6Q30">
    <property type="method" value="X-ray"/>
    <property type="resolution" value="1.50 A"/>
    <property type="chains" value="A/B=27-270"/>
</dbReference>
<dbReference type="PDB" id="6RMF">
    <property type="method" value="X-ray"/>
    <property type="resolution" value="1.51 A"/>
    <property type="chains" value="A/B=29-270"/>
</dbReference>
<dbReference type="PDB" id="6TWT">
    <property type="method" value="X-ray"/>
    <property type="resolution" value="0.95 A"/>
    <property type="chains" value="A/B=29-270"/>
</dbReference>
<dbReference type="PDB" id="6V1M">
    <property type="method" value="X-ray"/>
    <property type="resolution" value="1.05 A"/>
    <property type="chains" value="A=42-270"/>
</dbReference>
<dbReference type="PDB" id="6ZYP">
    <property type="method" value="X-ray"/>
    <property type="resolution" value="1.40 A"/>
    <property type="chains" value="A/B=29-270"/>
</dbReference>
<dbReference type="PDB" id="6ZYQ">
    <property type="method" value="X-ray"/>
    <property type="resolution" value="1.70 A"/>
    <property type="chains" value="A/B=29-270"/>
</dbReference>
<dbReference type="PDB" id="8HY6">
    <property type="method" value="X-ray"/>
    <property type="resolution" value="1.40 A"/>
    <property type="chains" value="A/B=30-270"/>
</dbReference>
<dbReference type="PDB" id="8HYC">
    <property type="method" value="X-ray"/>
    <property type="resolution" value="1.15 A"/>
    <property type="chains" value="A/B=30-270"/>
</dbReference>
<dbReference type="PDB" id="8R5T">
    <property type="method" value="X-ray"/>
    <property type="resolution" value="1.58 A"/>
    <property type="chains" value="A/B=29-270"/>
</dbReference>
<dbReference type="PDB" id="8SK2">
    <property type="method" value="X-ray"/>
    <property type="resolution" value="1.30 A"/>
    <property type="chains" value="A=2-270"/>
</dbReference>
<dbReference type="PDB" id="8SKO">
    <property type="method" value="X-ray"/>
    <property type="resolution" value="1.30 A"/>
    <property type="chains" value="A/B=42-270"/>
</dbReference>
<dbReference type="PDB" id="8SKP">
    <property type="method" value="X-ray"/>
    <property type="resolution" value="1.30 A"/>
    <property type="chains" value="A=42-270"/>
</dbReference>
<dbReference type="PDBsum" id="3PG4"/>
<dbReference type="PDBsum" id="3RKJ"/>
<dbReference type="PDBsum" id="3RKK"/>
<dbReference type="PDBsum" id="3SBL"/>
<dbReference type="PDBsum" id="3SFP"/>
<dbReference type="PDBsum" id="3SPU"/>
<dbReference type="PDBsum" id="3SRX"/>
<dbReference type="PDBsum" id="3ZR9"/>
<dbReference type="PDBsum" id="4EXS"/>
<dbReference type="PDBsum" id="4EXY"/>
<dbReference type="PDBsum" id="4EY2"/>
<dbReference type="PDBsum" id="4EYB"/>
<dbReference type="PDBsum" id="4EYF"/>
<dbReference type="PDBsum" id="4EYL"/>
<dbReference type="PDBsum" id="4GYQ"/>
<dbReference type="PDBsum" id="4GYU"/>
<dbReference type="PDBsum" id="4H0D"/>
<dbReference type="PDBsum" id="4HKY"/>
<dbReference type="PDBsum" id="4HL1"/>
<dbReference type="PDBsum" id="4HL2"/>
<dbReference type="PDBsum" id="4RAM"/>
<dbReference type="PDBsum" id="4RAW"/>
<dbReference type="PDBsum" id="4RBS"/>
<dbReference type="PDBsum" id="4RL0"/>
<dbReference type="PDBsum" id="4RL2"/>
<dbReference type="PDBsum" id="4RM5"/>
<dbReference type="PDBsum" id="4U4L"/>
<dbReference type="PDBsum" id="5A5Z"/>
<dbReference type="PDBsum" id="5JQJ"/>
<dbReference type="PDBsum" id="5K4M"/>
<dbReference type="PDBsum" id="5N0H"/>
<dbReference type="PDBsum" id="5N0I"/>
<dbReference type="PDBsum" id="5NBK"/>
<dbReference type="PDBsum" id="5O2E"/>
<dbReference type="PDBsum" id="5O2F"/>
<dbReference type="PDBsum" id="5WIG"/>
<dbReference type="PDBsum" id="5XP6"/>
<dbReference type="PDBsum" id="5XP9"/>
<dbReference type="PDBsum" id="5ZGE"/>
<dbReference type="PDBsum" id="5ZGF"/>
<dbReference type="PDBsum" id="5ZGI"/>
<dbReference type="PDBsum" id="5ZGP"/>
<dbReference type="PDBsum" id="5ZGQ"/>
<dbReference type="PDBsum" id="5ZGR"/>
<dbReference type="PDBsum" id="5ZGT"/>
<dbReference type="PDBsum" id="5ZGU"/>
<dbReference type="PDBsum" id="5ZGV"/>
<dbReference type="PDBsum" id="5ZGW"/>
<dbReference type="PDBsum" id="5ZGX"/>
<dbReference type="PDBsum" id="5ZGY"/>
<dbReference type="PDBsum" id="5ZGZ"/>
<dbReference type="PDBsum" id="5ZH1"/>
<dbReference type="PDBsum" id="5ZIO"/>
<dbReference type="PDBsum" id="5ZJ1"/>
<dbReference type="PDBsum" id="5ZJ2"/>
<dbReference type="PDBsum" id="5ZJ7"/>
<dbReference type="PDBsum" id="5ZJ8"/>
<dbReference type="PDBsum" id="5ZJC"/>
<dbReference type="PDBsum" id="6C6I"/>
<dbReference type="PDBsum" id="6CAC"/>
<dbReference type="PDBsum" id="6D1A"/>
<dbReference type="PDBsum" id="6D1B"/>
<dbReference type="PDBsum" id="6D1C"/>
<dbReference type="PDBsum" id="6D1D"/>
<dbReference type="PDBsum" id="6D1E"/>
<dbReference type="PDBsum" id="6D1F"/>
<dbReference type="PDBsum" id="6D1G"/>
<dbReference type="PDBsum" id="6D1H"/>
<dbReference type="PDBsum" id="6D1I"/>
<dbReference type="PDBsum" id="6D1J"/>
<dbReference type="PDBsum" id="6D1K"/>
<dbReference type="PDBsum" id="6EFJ"/>
<dbReference type="PDBsum" id="6EX7"/>
<dbReference type="PDBsum" id="6IBS"/>
<dbReference type="PDBsum" id="6IBV"/>
<dbReference type="PDBsum" id="6JKB"/>
<dbReference type="PDBsum" id="6LHE"/>
<dbReference type="PDBsum" id="6LIP"/>
<dbReference type="PDBsum" id="6LIZ"/>
<dbReference type="PDBsum" id="6LJ0"/>
<dbReference type="PDBsum" id="6LJ1"/>
<dbReference type="PDBsum" id="6LJ2"/>
<dbReference type="PDBsum" id="6LJ4"/>
<dbReference type="PDBsum" id="6LJ5"/>
<dbReference type="PDBsum" id="6LJ6"/>
<dbReference type="PDBsum" id="6LJ7"/>
<dbReference type="PDBsum" id="6LJ8"/>
<dbReference type="PDBsum" id="6MDU"/>
<dbReference type="PDBsum" id="6MGY"/>
<dbReference type="PDBsum" id="6MGZ"/>
<dbReference type="PDBsum" id="6NY7"/>
<dbReference type="PDBsum" id="6O3R"/>
<dbReference type="PDBsum" id="6Q2Y"/>
<dbReference type="PDBsum" id="6Q30"/>
<dbReference type="PDBsum" id="6RMF"/>
<dbReference type="PDBsum" id="6TWT"/>
<dbReference type="PDBsum" id="6V1M"/>
<dbReference type="PDBsum" id="6ZYP"/>
<dbReference type="PDBsum" id="6ZYQ"/>
<dbReference type="PDBsum" id="8HY6"/>
<dbReference type="PDBsum" id="8HYC"/>
<dbReference type="PDBsum" id="8R5T"/>
<dbReference type="PDBsum" id="8SK2"/>
<dbReference type="PDBsum" id="8SKO"/>
<dbReference type="PDBsum" id="8SKP"/>
<dbReference type="SMR" id="C7C422"/>
<dbReference type="BindingDB" id="C7C422"/>
<dbReference type="ChEMBL" id="CHEMBL1667695"/>
<dbReference type="ChEMBL" id="CHEMBL5465386"/>
<dbReference type="DrugBank" id="DB04272">
    <property type="generic name" value="Citric acid"/>
</dbReference>
<dbReference type="DrugCentral" id="C7C422"/>
<dbReference type="CARD" id="ARO:3000589">
    <property type="molecule name" value="NDM-1"/>
    <property type="mechanism identifier" value="ARO:0001004"/>
    <property type="mechanism name" value="antibiotic inactivation"/>
</dbReference>
<dbReference type="ABCD" id="C7C422">
    <property type="antibodies" value="3 sequenced antibodies"/>
</dbReference>
<dbReference type="KEGG" id="ag:CAZ39946"/>
<dbReference type="BRENDA" id="3.5.2.6">
    <property type="organism ID" value="2814"/>
</dbReference>
<dbReference type="SABIO-RK" id="C7C422"/>
<dbReference type="EvolutionaryTrace" id="C7C422"/>
<dbReference type="PRO" id="PR:C7C422"/>
<dbReference type="GO" id="GO:0042597">
    <property type="term" value="C:periplasmic space"/>
    <property type="evidence" value="ECO:0007669"/>
    <property type="project" value="UniProtKB-SubCell"/>
</dbReference>
<dbReference type="GO" id="GO:0008800">
    <property type="term" value="F:beta-lactamase activity"/>
    <property type="evidence" value="ECO:0000314"/>
    <property type="project" value="UniProtKB"/>
</dbReference>
<dbReference type="GO" id="GO:0008270">
    <property type="term" value="F:zinc ion binding"/>
    <property type="evidence" value="ECO:0000314"/>
    <property type="project" value="UniProtKB"/>
</dbReference>
<dbReference type="GO" id="GO:0017001">
    <property type="term" value="P:antibiotic catabolic process"/>
    <property type="evidence" value="ECO:0000314"/>
    <property type="project" value="UniProtKB"/>
</dbReference>
<dbReference type="GO" id="GO:0046677">
    <property type="term" value="P:response to antibiotic"/>
    <property type="evidence" value="ECO:0007669"/>
    <property type="project" value="UniProtKB-KW"/>
</dbReference>
<dbReference type="CDD" id="cd16300">
    <property type="entry name" value="NDM_FIM-like_MBL-B1"/>
    <property type="match status" value="1"/>
</dbReference>
<dbReference type="FunFam" id="3.60.15.10:FF:000007">
    <property type="entry name" value="Metallo-beta-lactamase NDM-1"/>
    <property type="match status" value="1"/>
</dbReference>
<dbReference type="Gene3D" id="3.60.15.10">
    <property type="entry name" value="Ribonuclease Z/Hydroxyacylglutathione hydrolase-like"/>
    <property type="match status" value="1"/>
</dbReference>
<dbReference type="InterPro" id="IPR001279">
    <property type="entry name" value="Metallo-B-lactamas"/>
</dbReference>
<dbReference type="InterPro" id="IPR050855">
    <property type="entry name" value="NDM-1-like"/>
</dbReference>
<dbReference type="InterPro" id="IPR036866">
    <property type="entry name" value="RibonucZ/Hydroxyglut_hydro"/>
</dbReference>
<dbReference type="NCBIfam" id="NF012229">
    <property type="entry name" value="bla_class_B_core"/>
    <property type="match status" value="1"/>
</dbReference>
<dbReference type="NCBIfam" id="NF033088">
    <property type="entry name" value="bla_subclass_B1"/>
    <property type="match status" value="1"/>
</dbReference>
<dbReference type="NCBIfam" id="NF000259">
    <property type="entry name" value="blaNDM"/>
    <property type="match status" value="1"/>
</dbReference>
<dbReference type="PANTHER" id="PTHR42951:SF4">
    <property type="entry name" value="ACYL-COENZYME A THIOESTERASE MBLAC2"/>
    <property type="match status" value="1"/>
</dbReference>
<dbReference type="PANTHER" id="PTHR42951">
    <property type="entry name" value="METALLO-BETA-LACTAMASE DOMAIN-CONTAINING"/>
    <property type="match status" value="1"/>
</dbReference>
<dbReference type="Pfam" id="PF00753">
    <property type="entry name" value="Lactamase_B"/>
    <property type="match status" value="1"/>
</dbReference>
<dbReference type="SMART" id="SM00849">
    <property type="entry name" value="Lactamase_B"/>
    <property type="match status" value="1"/>
</dbReference>
<dbReference type="SUPFAM" id="SSF56281">
    <property type="entry name" value="Metallo-hydrolase/oxidoreductase"/>
    <property type="match status" value="1"/>
</dbReference>
<feature type="signal peptide" evidence="1">
    <location>
        <begin position="1"/>
        <end position="28"/>
    </location>
</feature>
<feature type="chain" id="PRO_0000400316" description="Metallo-beta-lactamase type 2">
    <location>
        <begin position="29"/>
        <end position="270"/>
    </location>
</feature>
<feature type="binding site" evidence="5 6">
    <location>
        <position position="120"/>
    </location>
    <ligand>
        <name>Zn(2+)</name>
        <dbReference type="ChEBI" id="CHEBI:29105"/>
        <label>1</label>
    </ligand>
</feature>
<feature type="binding site" evidence="5 6">
    <location>
        <position position="122"/>
    </location>
    <ligand>
        <name>Zn(2+)</name>
        <dbReference type="ChEBI" id="CHEBI:29105"/>
        <label>1</label>
    </ligand>
</feature>
<feature type="binding site" evidence="5 6">
    <location>
        <position position="124"/>
    </location>
    <ligand>
        <name>Zn(2+)</name>
        <dbReference type="ChEBI" id="CHEBI:29105"/>
        <label>2</label>
    </ligand>
</feature>
<feature type="binding site" evidence="5 6">
    <location>
        <position position="189"/>
    </location>
    <ligand>
        <name>Zn(2+)</name>
        <dbReference type="ChEBI" id="CHEBI:29105"/>
        <label>1</label>
    </ligand>
</feature>
<feature type="binding site" evidence="5 6">
    <location>
        <position position="208"/>
    </location>
    <ligand>
        <name>Zn(2+)</name>
        <dbReference type="ChEBI" id="CHEBI:29105"/>
        <label>2</label>
    </ligand>
</feature>
<feature type="binding site" evidence="5">
    <location>
        <position position="211"/>
    </location>
    <ligand>
        <name>substrate</name>
    </ligand>
</feature>
<feature type="binding site" evidence="5">
    <location>
        <position position="220"/>
    </location>
    <ligand>
        <name>substrate</name>
    </ligand>
</feature>
<feature type="binding site" evidence="5 6">
    <location>
        <position position="250"/>
    </location>
    <ligand>
        <name>Zn(2+)</name>
        <dbReference type="ChEBI" id="CHEBI:29105"/>
        <label>2</label>
    </ligand>
</feature>
<feature type="strand" evidence="11">
    <location>
        <begin position="34"/>
        <end position="36"/>
    </location>
</feature>
<feature type="strand" evidence="10">
    <location>
        <begin position="44"/>
        <end position="46"/>
    </location>
</feature>
<feature type="strand" evidence="10">
    <location>
        <begin position="49"/>
        <end position="55"/>
    </location>
</feature>
<feature type="strand" evidence="10">
    <location>
        <begin position="58"/>
        <end position="67"/>
    </location>
</feature>
<feature type="turn" evidence="10">
    <location>
        <begin position="68"/>
        <end position="70"/>
    </location>
</feature>
<feature type="strand" evidence="10">
    <location>
        <begin position="71"/>
        <end position="82"/>
    </location>
</feature>
<feature type="strand" evidence="10">
    <location>
        <begin position="85"/>
        <end position="90"/>
    </location>
</feature>
<feature type="helix" evidence="10">
    <location>
        <begin position="95"/>
        <end position="108"/>
    </location>
</feature>
<feature type="strand" evidence="10">
    <location>
        <begin position="113"/>
        <end position="117"/>
    </location>
</feature>
<feature type="strand" evidence="10">
    <location>
        <begin position="120"/>
        <end position="122"/>
    </location>
</feature>
<feature type="helix" evidence="10">
    <location>
        <begin position="123"/>
        <end position="126"/>
    </location>
</feature>
<feature type="helix" evidence="10">
    <location>
        <begin position="129"/>
        <end position="134"/>
    </location>
</feature>
<feature type="strand" evidence="10">
    <location>
        <begin position="138"/>
        <end position="142"/>
    </location>
</feature>
<feature type="helix" evidence="10">
    <location>
        <begin position="143"/>
        <end position="148"/>
    </location>
</feature>
<feature type="turn" evidence="10">
    <location>
        <begin position="149"/>
        <end position="153"/>
    </location>
</feature>
<feature type="strand" evidence="10">
    <location>
        <begin position="158"/>
        <end position="161"/>
    </location>
</feature>
<feature type="strand" evidence="10">
    <location>
        <begin position="167"/>
        <end position="169"/>
    </location>
</feature>
<feature type="helix" evidence="10">
    <location>
        <begin position="171"/>
        <end position="173"/>
    </location>
</feature>
<feature type="strand" evidence="10">
    <location>
        <begin position="180"/>
        <end position="183"/>
    </location>
</feature>
<feature type="strand" evidence="10">
    <location>
        <begin position="187"/>
        <end position="190"/>
    </location>
</feature>
<feature type="strand" evidence="10">
    <location>
        <begin position="195"/>
        <end position="198"/>
    </location>
</feature>
<feature type="strand" evidence="10">
    <location>
        <begin position="201"/>
        <end position="205"/>
    </location>
</feature>
<feature type="helix" evidence="10">
    <location>
        <begin position="207"/>
        <end position="209"/>
    </location>
</feature>
<feature type="helix" evidence="9">
    <location>
        <begin position="221"/>
        <end position="223"/>
    </location>
</feature>
<feature type="turn" evidence="10">
    <location>
        <begin position="226"/>
        <end position="228"/>
    </location>
</feature>
<feature type="helix" evidence="10">
    <location>
        <begin position="229"/>
        <end position="239"/>
    </location>
</feature>
<feature type="strand" evidence="10">
    <location>
        <begin position="245"/>
        <end position="247"/>
    </location>
</feature>
<feature type="strand" evidence="10">
    <location>
        <begin position="249"/>
        <end position="251"/>
    </location>
</feature>
<feature type="helix" evidence="10">
    <location>
        <begin position="257"/>
        <end position="267"/>
    </location>
</feature>
<name>BLAN1_KLEPN</name>
<accession>C7C422</accession>
<evidence type="ECO:0000255" key="1"/>
<evidence type="ECO:0000269" key="2">
    <source>
    </source>
</evidence>
<evidence type="ECO:0000269" key="3">
    <source>
    </source>
</evidence>
<evidence type="ECO:0000269" key="4">
    <source>
    </source>
</evidence>
<evidence type="ECO:0000269" key="5">
    <source>
    </source>
</evidence>
<evidence type="ECO:0000269" key="6">
    <source>
    </source>
</evidence>
<evidence type="ECO:0000303" key="7">
    <source>
    </source>
</evidence>
<evidence type="ECO:0000305" key="8"/>
<evidence type="ECO:0007829" key="9">
    <source>
        <dbReference type="PDB" id="3RKK"/>
    </source>
</evidence>
<evidence type="ECO:0007829" key="10">
    <source>
        <dbReference type="PDB" id="5XP6"/>
    </source>
</evidence>
<evidence type="ECO:0007829" key="11">
    <source>
        <dbReference type="PDB" id="5ZGE"/>
    </source>
</evidence>
<proteinExistence type="evidence at protein level"/>
<keyword id="KW-0002">3D-structure</keyword>
<keyword id="KW-0046">Antibiotic resistance</keyword>
<keyword id="KW-0378">Hydrolase</keyword>
<keyword id="KW-0479">Metal-binding</keyword>
<keyword id="KW-0574">Periplasm</keyword>
<keyword id="KW-0614">Plasmid</keyword>
<keyword id="KW-0732">Signal</keyword>
<keyword id="KW-0862">Zinc</keyword>
<organism>
    <name type="scientific">Klebsiella pneumoniae</name>
    <dbReference type="NCBI Taxonomy" id="573"/>
    <lineage>
        <taxon>Bacteria</taxon>
        <taxon>Pseudomonadati</taxon>
        <taxon>Pseudomonadota</taxon>
        <taxon>Gammaproteobacteria</taxon>
        <taxon>Enterobacterales</taxon>
        <taxon>Enterobacteriaceae</taxon>
        <taxon>Klebsiella/Raoultella group</taxon>
        <taxon>Klebsiella</taxon>
        <taxon>Klebsiella pneumoniae complex</taxon>
    </lineage>
</organism>
<gene>
    <name evidence="7" type="primary">blaNDM-1</name>
</gene>
<geneLocation type="plasmid">
    <name>pKpANDM-1</name>
</geneLocation>
<reference key="1">
    <citation type="journal article" date="2009" name="Antimicrob. Agents Chemother.">
        <title>Characterization of a new metallo-beta-lactamase gene, bla(NDM-1), and a novel erythromycin esterase gene carried on a unique genetic structure in Klebsiella pneumoniae sequence type 14 from India.</title>
        <authorList>
            <person name="Yong D."/>
            <person name="Toleman M.A."/>
            <person name="Giske C.G."/>
            <person name="Cho H.S."/>
            <person name="Sundman K."/>
            <person name="Lee K."/>
            <person name="Walsh T.R."/>
        </authorList>
    </citation>
    <scope>NUCLEOTIDE SEQUENCE [GENOMIC DNA]</scope>
    <scope>FUNCTION</scope>
    <scope>CATALYTIC ACTIVITY</scope>
    <scope>BIOPHYSICOCHEMICAL PROPERTIES</scope>
    <scope>ACTIVITY REGULATION</scope>
    <scope>SUBUNIT</scope>
    <scope>SUBSTRATE SPECIFICITY</scope>
    <source>
        <strain>KP-05-506</strain>
    </source>
</reference>
<reference key="2">
    <citation type="journal article" date="2010" name="Lancet Infect. Dis.">
        <title>Emergence of a new antibiotic resistance mechanism in India, Pakistan, and the UK: a molecular, biological, and epidemiological study.</title>
        <authorList>
            <person name="Kumarasamy K.K."/>
            <person name="Toleman M.A."/>
            <person name="Walsh T.R."/>
            <person name="Bagaria J."/>
            <person name="Butt F."/>
            <person name="Balakrishnan R."/>
            <person name="Chaudhary U."/>
            <person name="Doumith M."/>
            <person name="Giske C.G."/>
            <person name="Irfan S."/>
            <person name="Krishnan P."/>
            <person name="Kumar A.V."/>
            <person name="Maharjan S."/>
            <person name="Mushtaq S."/>
            <person name="Noorie T."/>
            <person name="Paterson D.L."/>
            <person name="Pearson A."/>
            <person name="Perry C."/>
            <person name="Pike R."/>
            <person name="Rao B."/>
            <person name="Ray U."/>
            <person name="Sarma J.B."/>
            <person name="Sharma M."/>
            <person name="Sheridan E."/>
            <person name="Thirunarayan M.A."/>
            <person name="Turton J."/>
            <person name="Upadhyay S."/>
            <person name="Warner M."/>
            <person name="Welfare W."/>
            <person name="Livermore D.M."/>
            <person name="Woodford N."/>
        </authorList>
    </citation>
    <scope>EPIDEMIOLOGY</scope>
</reference>
<reference key="3">
    <citation type="journal article" date="2010" name="MMWR Morb. Mortal. Wkly. Rep.">
        <title>Detection of Enterobacteriaceae isolates carrying metallo-beta-lactamase -United States, 2010.</title>
        <authorList>
            <person name="Limbago B."/>
            <person name="Kallen A."/>
        </authorList>
    </citation>
    <scope>EPIDEMIOLOGY</scope>
</reference>
<reference key="4">
    <citation type="journal article" date="2012" name="J. Am. Chem. Soc.">
        <title>New Delhi metallo-beta-lactamase: structural insights into beta-lactam recognition and inhibition.</title>
        <authorList>
            <person name="King D.T."/>
            <person name="Worrall L.J."/>
            <person name="Gruninger R."/>
            <person name="Strynadka N.C."/>
        </authorList>
    </citation>
    <scope>X-RAY CRYSTALLOGRAPHY (1.16 ANGSTROMS) IN COMPLEX WITH SUBSTRATE ANALOGS AND ZINC IONS</scope>
    <scope>COFACTOR</scope>
    <scope>SUBUNIT</scope>
</reference>
<reference key="5">
    <citation type="journal article" date="2015" name="J. Med. Chem.">
        <title>Approved drugs containing thiols as inhibitors of metallo-beta-lactamases: strategy to combat multidrug-resistant bacteria.</title>
        <authorList>
            <person name="Klingler F.M."/>
            <person name="Wichelhaus T.A."/>
            <person name="Frank D."/>
            <person name="Cuesta-Bernal J."/>
            <person name="El-Delik J."/>
            <person name="Muller H.F."/>
            <person name="Sjuts H."/>
            <person name="Gottig S."/>
            <person name="Koenigs A."/>
            <person name="Pos K.M."/>
            <person name="Pogoryelov D."/>
            <person name="Proschak E."/>
        </authorList>
    </citation>
    <scope>X-RAY CRYSTALLOGRAPHY (2.60 ANGSTROMS) OF 29-270 IN COMPLEX WITH ZINC IONS</scope>
    <scope>ACTIVITY REGULATION</scope>
    <scope>COFACTOR</scope>
    <scope>SUBUNIT</scope>
</reference>
<comment type="function">
    <text evidence="2">Confers resistance to the different beta-lactams antibiotics (penicillin, cephalosporin and carbapenem) via the hydrolysis of the beta-lactam ring. Does not confer resistance to the polymixin colistin or the fluoroquinolone ciprofloxacin.</text>
</comment>
<comment type="catalytic activity">
    <reaction evidence="2">
        <text>a beta-lactam + H2O = a substituted beta-amino acid</text>
        <dbReference type="Rhea" id="RHEA:20401"/>
        <dbReference type="ChEBI" id="CHEBI:15377"/>
        <dbReference type="ChEBI" id="CHEBI:35627"/>
        <dbReference type="ChEBI" id="CHEBI:140347"/>
        <dbReference type="EC" id="3.5.2.6"/>
    </reaction>
</comment>
<comment type="cofactor">
    <cofactor evidence="5 6">
        <name>Zn(2+)</name>
        <dbReference type="ChEBI" id="CHEBI:29105"/>
    </cofactor>
    <text evidence="5 6">Binds 2 Zn(2+) ions per subunit.</text>
</comment>
<comment type="activity regulation">
    <text evidence="2 6">Inhibits by captopril, thiorphan, dimercaprol and tiopronin (PubMed:25815530). This enzyme is not susceptible to inactivation by the beta-lactamase-blocking agents clavulanic acid (PubMed:19770275).</text>
</comment>
<comment type="biophysicochemical properties">
    <kinetics>
        <KM evidence="2">8 uM for cefuroxime</KM>
        <KM evidence="2">10 uM for cefotaxime</KM>
        <KM evidence="2">10 uM for cephalothin</KM>
        <KM evidence="2">12 uM for piperacillin</KM>
        <KM evidence="2">16 uM for penicillin G</KM>
        <KM evidence="2">22 uM for ampicillin</KM>
        <KM evidence="2">49 uM for cefoxitin</KM>
        <KM evidence="2">49 uM for meropenem</KM>
        <KM evidence="2">77 uM for cefepime</KM>
        <KM evidence="2">94 uM for imipenem</KM>
        <KM evidence="2">181 uM for ceftazidime</KM>
        <text evidence="2">No activity detected against the monobactam aztreonam.</text>
    </kinetics>
</comment>
<comment type="subunit">
    <text evidence="2 5 6">Monomer.</text>
</comment>
<comment type="subcellular location">
    <subcellularLocation>
        <location evidence="8">Periplasm</location>
    </subcellularLocation>
</comment>
<comment type="miscellaneous">
    <text evidence="3 4">Enterobacteriaceae carrying this gene (identified by PCR) have been isolated in Sweden, India, Pakistan, Bangladesh, England, Scotland, Northern Ireland, Australia and the USA. The organisms they were identified in were K.pneumoniae, Enterobacter cloacae, E.coli, Proteus spp, Citrobacter freundii, Morganella morganii, Providencia spp and Klebsille oxytoca. In India most isolates were from community-acquired infections rather than hospital-acquired infections, indicating the gene is widespread in the environment.</text>
</comment>
<comment type="similarity">
    <text evidence="8">Belongs to the metallo-beta-lactamase superfamily. Class-B beta-lactamase family.</text>
</comment>
<comment type="caution">
    <text evidence="8">Transfer of a plasmid encoding this gene has been detected between bacteria within a patient (between K.pneumoniae and E.coli). Additionally the gene may be encoded within a transposon.</text>
</comment>
<protein>
    <recommendedName>
        <fullName evidence="8">Metallo-beta-lactamase type 2</fullName>
        <ecNumber evidence="2">3.5.2.6</ecNumber>
    </recommendedName>
    <alternativeName>
        <fullName evidence="8">B2 metallo-beta-lactamase</fullName>
    </alternativeName>
    <alternativeName>
        <fullName evidence="7">Beta-lactamase type II</fullName>
    </alternativeName>
    <alternativeName>
        <fullName evidence="7">Metallo-beta-lactamase NDM-1</fullName>
    </alternativeName>
    <alternativeName>
        <fullName evidence="7">Metallo-beta-lactamase type II</fullName>
    </alternativeName>
    <alternativeName>
        <fullName evidence="7">New Delhi metallo-beta-lactamase-1</fullName>
        <shortName evidence="7">NDM-1</shortName>
    </alternativeName>
</protein>